<organism>
    <name type="scientific">Streptococcus pneumoniae serotype 4 (strain ATCC BAA-334 / TIGR4)</name>
    <dbReference type="NCBI Taxonomy" id="170187"/>
    <lineage>
        <taxon>Bacteria</taxon>
        <taxon>Bacillati</taxon>
        <taxon>Bacillota</taxon>
        <taxon>Bacilli</taxon>
        <taxon>Lactobacillales</taxon>
        <taxon>Streptococcaceae</taxon>
        <taxon>Streptococcus</taxon>
    </lineage>
</organism>
<evidence type="ECO:0000255" key="1">
    <source>
        <dbReference type="HAMAP-Rule" id="MF_00133"/>
    </source>
</evidence>
<evidence type="ECO:0007829" key="2">
    <source>
        <dbReference type="PDB" id="5KIN"/>
    </source>
</evidence>
<feature type="chain" id="PRO_0000099008" description="Tryptophan synthase beta chain">
    <location>
        <begin position="1"/>
        <end position="407"/>
    </location>
</feature>
<feature type="modified residue" description="N6-(pyridoxal phosphate)lysine" evidence="1">
    <location>
        <position position="91"/>
    </location>
</feature>
<feature type="strand" evidence="2">
    <location>
        <begin position="10"/>
        <end position="12"/>
    </location>
</feature>
<feature type="helix" evidence="2">
    <location>
        <begin position="22"/>
        <end position="40"/>
    </location>
</feature>
<feature type="helix" evidence="2">
    <location>
        <begin position="42"/>
        <end position="54"/>
    </location>
</feature>
<feature type="strand" evidence="2">
    <location>
        <begin position="62"/>
        <end position="64"/>
    </location>
</feature>
<feature type="helix" evidence="2">
    <location>
        <begin position="66"/>
        <end position="72"/>
    </location>
</feature>
<feature type="strand" evidence="2">
    <location>
        <begin position="74"/>
        <end position="81"/>
    </location>
</feature>
<feature type="helix" evidence="2">
    <location>
        <begin position="82"/>
        <end position="84"/>
    </location>
</feature>
<feature type="helix" evidence="2">
    <location>
        <begin position="93"/>
        <end position="104"/>
    </location>
</feature>
<feature type="strand" evidence="2">
    <location>
        <begin position="109"/>
        <end position="113"/>
    </location>
</feature>
<feature type="strand" evidence="2">
    <location>
        <begin position="115"/>
        <end position="117"/>
    </location>
</feature>
<feature type="helix" evidence="2">
    <location>
        <begin position="118"/>
        <end position="129"/>
    </location>
</feature>
<feature type="strand" evidence="2">
    <location>
        <begin position="133"/>
        <end position="139"/>
    </location>
</feature>
<feature type="helix" evidence="2">
    <location>
        <begin position="140"/>
        <end position="143"/>
    </location>
</feature>
<feature type="helix" evidence="2">
    <location>
        <begin position="147"/>
        <end position="155"/>
    </location>
</feature>
<feature type="strand" evidence="2">
    <location>
        <begin position="159"/>
        <end position="163"/>
    </location>
</feature>
<feature type="helix" evidence="2">
    <location>
        <begin position="170"/>
        <end position="183"/>
    </location>
</feature>
<feature type="turn" evidence="2">
    <location>
        <begin position="184"/>
        <end position="187"/>
    </location>
</feature>
<feature type="strand" evidence="2">
    <location>
        <begin position="188"/>
        <end position="190"/>
    </location>
</feature>
<feature type="helix" evidence="2">
    <location>
        <begin position="201"/>
        <end position="209"/>
    </location>
</feature>
<feature type="helix" evidence="2">
    <location>
        <begin position="211"/>
        <end position="224"/>
    </location>
</feature>
<feature type="strand" evidence="2">
    <location>
        <begin position="230"/>
        <end position="235"/>
    </location>
</feature>
<feature type="strand" evidence="2">
    <location>
        <begin position="237"/>
        <end position="239"/>
    </location>
</feature>
<feature type="helix" evidence="2">
    <location>
        <begin position="240"/>
        <end position="246"/>
    </location>
</feature>
<feature type="helix" evidence="2">
    <location>
        <begin position="247"/>
        <end position="249"/>
    </location>
</feature>
<feature type="strand" evidence="2">
    <location>
        <begin position="256"/>
        <end position="262"/>
    </location>
</feature>
<feature type="strand" evidence="2">
    <location>
        <begin position="269"/>
        <end position="271"/>
    </location>
</feature>
<feature type="helix" evidence="2">
    <location>
        <begin position="275"/>
        <end position="278"/>
    </location>
</feature>
<feature type="strand" evidence="2">
    <location>
        <begin position="280"/>
        <end position="284"/>
    </location>
</feature>
<feature type="strand" evidence="2">
    <location>
        <begin position="287"/>
        <end position="291"/>
    </location>
</feature>
<feature type="helix" evidence="2">
    <location>
        <begin position="307"/>
        <end position="309"/>
    </location>
</feature>
<feature type="helix" evidence="2">
    <location>
        <begin position="316"/>
        <end position="323"/>
    </location>
</feature>
<feature type="strand" evidence="2">
    <location>
        <begin position="326"/>
        <end position="332"/>
    </location>
</feature>
<feature type="helix" evidence="2">
    <location>
        <begin position="334"/>
        <end position="347"/>
    </location>
</feature>
<feature type="helix" evidence="2">
    <location>
        <begin position="354"/>
        <end position="370"/>
    </location>
</feature>
<feature type="strand" evidence="2">
    <location>
        <begin position="375"/>
        <end position="380"/>
    </location>
</feature>
<feature type="strand" evidence="2">
    <location>
        <begin position="382"/>
        <end position="384"/>
    </location>
</feature>
<feature type="helix" evidence="2">
    <location>
        <begin position="385"/>
        <end position="387"/>
    </location>
</feature>
<feature type="helix" evidence="2">
    <location>
        <begin position="388"/>
        <end position="401"/>
    </location>
</feature>
<protein>
    <recommendedName>
        <fullName evidence="1">Tryptophan synthase beta chain</fullName>
        <ecNumber evidence="1">4.2.1.20</ecNumber>
    </recommendedName>
</protein>
<dbReference type="EC" id="4.2.1.20" evidence="1"/>
<dbReference type="EMBL" id="AE005672">
    <property type="protein sequence ID" value="AAK75885.1"/>
    <property type="molecule type" value="Genomic_DNA"/>
</dbReference>
<dbReference type="PIR" id="D95211">
    <property type="entry name" value="D95211"/>
</dbReference>
<dbReference type="RefSeq" id="WP_000331293.1">
    <property type="nucleotide sequence ID" value="NZ_CP155539.1"/>
</dbReference>
<dbReference type="PDB" id="5KIN">
    <property type="method" value="X-ray"/>
    <property type="resolution" value="2.45 A"/>
    <property type="chains" value="B/D=4-402"/>
</dbReference>
<dbReference type="PDBsum" id="5KIN"/>
<dbReference type="SMR" id="Q97P32"/>
<dbReference type="PaxDb" id="170187-SP_1812"/>
<dbReference type="EnsemblBacteria" id="AAK75885">
    <property type="protein sequence ID" value="AAK75885"/>
    <property type="gene ID" value="SP_1812"/>
</dbReference>
<dbReference type="KEGG" id="spn:SP_1812"/>
<dbReference type="eggNOG" id="COG0133">
    <property type="taxonomic scope" value="Bacteria"/>
</dbReference>
<dbReference type="PhylomeDB" id="Q97P32"/>
<dbReference type="BioCyc" id="SPNE170187:G1FZB-1844-MONOMER"/>
<dbReference type="UniPathway" id="UPA00035">
    <property type="reaction ID" value="UER00044"/>
</dbReference>
<dbReference type="Proteomes" id="UP000000585">
    <property type="component" value="Chromosome"/>
</dbReference>
<dbReference type="GO" id="GO:0005737">
    <property type="term" value="C:cytoplasm"/>
    <property type="evidence" value="ECO:0007669"/>
    <property type="project" value="TreeGrafter"/>
</dbReference>
<dbReference type="GO" id="GO:0004834">
    <property type="term" value="F:tryptophan synthase activity"/>
    <property type="evidence" value="ECO:0007669"/>
    <property type="project" value="UniProtKB-UniRule"/>
</dbReference>
<dbReference type="CDD" id="cd06446">
    <property type="entry name" value="Trp-synth_B"/>
    <property type="match status" value="1"/>
</dbReference>
<dbReference type="FunFam" id="3.40.50.1100:FF:000001">
    <property type="entry name" value="Tryptophan synthase beta chain"/>
    <property type="match status" value="1"/>
</dbReference>
<dbReference type="FunFam" id="3.40.50.1100:FF:000004">
    <property type="entry name" value="Tryptophan synthase beta chain"/>
    <property type="match status" value="1"/>
</dbReference>
<dbReference type="Gene3D" id="3.40.50.1100">
    <property type="match status" value="2"/>
</dbReference>
<dbReference type="HAMAP" id="MF_00133">
    <property type="entry name" value="Trp_synth_beta"/>
    <property type="match status" value="1"/>
</dbReference>
<dbReference type="InterPro" id="IPR006653">
    <property type="entry name" value="Trp_synth_b_CS"/>
</dbReference>
<dbReference type="InterPro" id="IPR006654">
    <property type="entry name" value="Trp_synth_beta"/>
</dbReference>
<dbReference type="InterPro" id="IPR023026">
    <property type="entry name" value="Trp_synth_beta/beta-like"/>
</dbReference>
<dbReference type="InterPro" id="IPR001926">
    <property type="entry name" value="TrpB-like_PALP"/>
</dbReference>
<dbReference type="InterPro" id="IPR036052">
    <property type="entry name" value="TrpB-like_PALP_sf"/>
</dbReference>
<dbReference type="NCBIfam" id="TIGR00263">
    <property type="entry name" value="trpB"/>
    <property type="match status" value="1"/>
</dbReference>
<dbReference type="PANTHER" id="PTHR48077:SF3">
    <property type="entry name" value="TRYPTOPHAN SYNTHASE"/>
    <property type="match status" value="1"/>
</dbReference>
<dbReference type="PANTHER" id="PTHR48077">
    <property type="entry name" value="TRYPTOPHAN SYNTHASE-RELATED"/>
    <property type="match status" value="1"/>
</dbReference>
<dbReference type="Pfam" id="PF00291">
    <property type="entry name" value="PALP"/>
    <property type="match status" value="1"/>
</dbReference>
<dbReference type="PIRSF" id="PIRSF001413">
    <property type="entry name" value="Trp_syn_beta"/>
    <property type="match status" value="1"/>
</dbReference>
<dbReference type="SUPFAM" id="SSF53686">
    <property type="entry name" value="Tryptophan synthase beta subunit-like PLP-dependent enzymes"/>
    <property type="match status" value="1"/>
</dbReference>
<dbReference type="PROSITE" id="PS00168">
    <property type="entry name" value="TRP_SYNTHASE_BETA"/>
    <property type="match status" value="1"/>
</dbReference>
<keyword id="KW-0002">3D-structure</keyword>
<keyword id="KW-0028">Amino-acid biosynthesis</keyword>
<keyword id="KW-0057">Aromatic amino acid biosynthesis</keyword>
<keyword id="KW-0456">Lyase</keyword>
<keyword id="KW-0663">Pyridoxal phosphate</keyword>
<keyword id="KW-1185">Reference proteome</keyword>
<keyword id="KW-0822">Tryptophan biosynthesis</keyword>
<proteinExistence type="evidence at protein level"/>
<comment type="function">
    <text evidence="1">The beta subunit is responsible for the synthesis of L-tryptophan from indole and L-serine.</text>
</comment>
<comment type="catalytic activity">
    <reaction evidence="1">
        <text>(1S,2R)-1-C-(indol-3-yl)glycerol 3-phosphate + L-serine = D-glyceraldehyde 3-phosphate + L-tryptophan + H2O</text>
        <dbReference type="Rhea" id="RHEA:10532"/>
        <dbReference type="ChEBI" id="CHEBI:15377"/>
        <dbReference type="ChEBI" id="CHEBI:33384"/>
        <dbReference type="ChEBI" id="CHEBI:57912"/>
        <dbReference type="ChEBI" id="CHEBI:58866"/>
        <dbReference type="ChEBI" id="CHEBI:59776"/>
        <dbReference type="EC" id="4.2.1.20"/>
    </reaction>
</comment>
<comment type="cofactor">
    <cofactor evidence="1">
        <name>pyridoxal 5'-phosphate</name>
        <dbReference type="ChEBI" id="CHEBI:597326"/>
    </cofactor>
</comment>
<comment type="pathway">
    <text evidence="1">Amino-acid biosynthesis; L-tryptophan biosynthesis; L-tryptophan from chorismate: step 5/5.</text>
</comment>
<comment type="subunit">
    <text evidence="1">Tetramer of two alpha and two beta chains.</text>
</comment>
<comment type="similarity">
    <text evidence="1">Belongs to the TrpB family.</text>
</comment>
<accession>Q97P32</accession>
<sequence length="407" mass="44275">MAYQEPNKDGFYGKFGGRFVPETLMTAVLELEKAYRESQADPSFQEELNQLLRQYVGRETPLYYAKNLTQHIGGAKIYLKREDLNHTGAHKINNALGQVWLAKRMGKKKIIAETGAGQHGVATATAAALFNMECTIYMGEEDVKRQALNVFRMELLGAKVEAVTDGSRVLKDAVNAALRSWVANIDDTHYILGSALGPHPFPEIVRDFQSVIGREAKQQYRDLTGRDLPDALVACVGGGSNAIGLFHPFVEDESVAMYGTEAAGLGVDTEHHAATLTKGRPGVLHGSLMDVLQDAHGQILEAFSISAGLDYPGIGPEHSHYHDIKRASYVPVTDEEALEGFQLLSRVEGIIPALESSHAIAFAVKLAKELGPEKSMIVCLSGRGDKDVVQVKDRLEADAAKKGEAHA</sequence>
<name>TRPB_STRPN</name>
<reference key="1">
    <citation type="journal article" date="2001" name="Science">
        <title>Complete genome sequence of a virulent isolate of Streptococcus pneumoniae.</title>
        <authorList>
            <person name="Tettelin H."/>
            <person name="Nelson K.E."/>
            <person name="Paulsen I.T."/>
            <person name="Eisen J.A."/>
            <person name="Read T.D."/>
            <person name="Peterson S.N."/>
            <person name="Heidelberg J.F."/>
            <person name="DeBoy R.T."/>
            <person name="Haft D.H."/>
            <person name="Dodson R.J."/>
            <person name="Durkin A.S."/>
            <person name="Gwinn M.L."/>
            <person name="Kolonay J.F."/>
            <person name="Nelson W.C."/>
            <person name="Peterson J.D."/>
            <person name="Umayam L.A."/>
            <person name="White O."/>
            <person name="Salzberg S.L."/>
            <person name="Lewis M.R."/>
            <person name="Radune D."/>
            <person name="Holtzapple E.K."/>
            <person name="Khouri H.M."/>
            <person name="Wolf A.M."/>
            <person name="Utterback T.R."/>
            <person name="Hansen C.L."/>
            <person name="McDonald L.A."/>
            <person name="Feldblyum T.V."/>
            <person name="Angiuoli S.V."/>
            <person name="Dickinson T."/>
            <person name="Hickey E.K."/>
            <person name="Holt I.E."/>
            <person name="Loftus B.J."/>
            <person name="Yang F."/>
            <person name="Smith H.O."/>
            <person name="Venter J.C."/>
            <person name="Dougherty B.A."/>
            <person name="Morrison D.A."/>
            <person name="Hollingshead S.K."/>
            <person name="Fraser C.M."/>
        </authorList>
    </citation>
    <scope>NUCLEOTIDE SEQUENCE [LARGE SCALE GENOMIC DNA]</scope>
    <source>
        <strain>ATCC BAA-334 / TIGR4</strain>
    </source>
</reference>
<gene>
    <name evidence="1" type="primary">trpB</name>
    <name type="ordered locus">SP_1812</name>
</gene>